<sequence>MTADIIYIYSDGACKGNPGAGGWGALLVAGGHRKEISGGEPNTTNNRMEMTAVIRALELLKRPSTVEVHTDSQYVQKGVSEWLPGWKRRNWRTADGKPVKNQDLWQQLDALSQQHRIVWKWVRGHAGHPENERADVLANQGVLQARQY</sequence>
<comment type="function">
    <text evidence="1">Endonuclease that specifically degrades the RNA of RNA-DNA hybrids.</text>
</comment>
<comment type="catalytic activity">
    <reaction evidence="1">
        <text>Endonucleolytic cleavage to 5'-phosphomonoester.</text>
        <dbReference type="EC" id="3.1.26.4"/>
    </reaction>
</comment>
<comment type="cofactor">
    <cofactor evidence="1">
        <name>Mg(2+)</name>
        <dbReference type="ChEBI" id="CHEBI:18420"/>
    </cofactor>
    <text evidence="1">Binds 1 Mg(2+) ion per subunit. May bind a second metal ion at a regulatory site, or after substrate binding.</text>
</comment>
<comment type="subunit">
    <text evidence="1">Monomer.</text>
</comment>
<comment type="subcellular location">
    <subcellularLocation>
        <location evidence="1">Cytoplasm</location>
    </subcellularLocation>
</comment>
<comment type="similarity">
    <text evidence="1">Belongs to the RNase H family.</text>
</comment>
<protein>
    <recommendedName>
        <fullName evidence="1">Ribonuclease H</fullName>
        <shortName evidence="1">RNase H</shortName>
        <ecNumber evidence="1">3.1.26.4</ecNumber>
    </recommendedName>
</protein>
<gene>
    <name evidence="1" type="primary">rnhA</name>
    <name type="ordered locus">Tbd_1663</name>
</gene>
<reference key="1">
    <citation type="journal article" date="2006" name="J. Bacteriol.">
        <title>The genome sequence of the obligately chemolithoautotrophic, facultatively anaerobic bacterium Thiobacillus denitrificans.</title>
        <authorList>
            <person name="Beller H.R."/>
            <person name="Chain P.S."/>
            <person name="Letain T.E."/>
            <person name="Chakicherla A."/>
            <person name="Larimer F.W."/>
            <person name="Richardson P.M."/>
            <person name="Coleman M.A."/>
            <person name="Wood A.P."/>
            <person name="Kelly D.P."/>
        </authorList>
    </citation>
    <scope>NUCLEOTIDE SEQUENCE [LARGE SCALE GENOMIC DNA]</scope>
    <source>
        <strain>ATCC 25259 / T1</strain>
    </source>
</reference>
<accession>Q3SIB2</accession>
<feature type="chain" id="PRO_0000332684" description="Ribonuclease H">
    <location>
        <begin position="1"/>
        <end position="148"/>
    </location>
</feature>
<feature type="domain" description="RNase H type-1" evidence="2">
    <location>
        <begin position="2"/>
        <end position="143"/>
    </location>
</feature>
<feature type="binding site" evidence="1">
    <location>
        <position position="11"/>
    </location>
    <ligand>
        <name>Mg(2+)</name>
        <dbReference type="ChEBI" id="CHEBI:18420"/>
        <label>1</label>
    </ligand>
</feature>
<feature type="binding site" evidence="1">
    <location>
        <position position="11"/>
    </location>
    <ligand>
        <name>Mg(2+)</name>
        <dbReference type="ChEBI" id="CHEBI:18420"/>
        <label>2</label>
    </ligand>
</feature>
<feature type="binding site" evidence="1">
    <location>
        <position position="49"/>
    </location>
    <ligand>
        <name>Mg(2+)</name>
        <dbReference type="ChEBI" id="CHEBI:18420"/>
        <label>1</label>
    </ligand>
</feature>
<feature type="binding site" evidence="1">
    <location>
        <position position="71"/>
    </location>
    <ligand>
        <name>Mg(2+)</name>
        <dbReference type="ChEBI" id="CHEBI:18420"/>
        <label>1</label>
    </ligand>
</feature>
<feature type="binding site" evidence="1">
    <location>
        <position position="135"/>
    </location>
    <ligand>
        <name>Mg(2+)</name>
        <dbReference type="ChEBI" id="CHEBI:18420"/>
        <label>2</label>
    </ligand>
</feature>
<organism>
    <name type="scientific">Thiobacillus denitrificans (strain ATCC 25259 / T1)</name>
    <dbReference type="NCBI Taxonomy" id="292415"/>
    <lineage>
        <taxon>Bacteria</taxon>
        <taxon>Pseudomonadati</taxon>
        <taxon>Pseudomonadota</taxon>
        <taxon>Betaproteobacteria</taxon>
        <taxon>Nitrosomonadales</taxon>
        <taxon>Thiobacillaceae</taxon>
        <taxon>Thiobacillus</taxon>
    </lineage>
</organism>
<evidence type="ECO:0000255" key="1">
    <source>
        <dbReference type="HAMAP-Rule" id="MF_00042"/>
    </source>
</evidence>
<evidence type="ECO:0000255" key="2">
    <source>
        <dbReference type="PROSITE-ProRule" id="PRU00408"/>
    </source>
</evidence>
<name>RNH_THIDA</name>
<proteinExistence type="inferred from homology"/>
<dbReference type="EC" id="3.1.26.4" evidence="1"/>
<dbReference type="EMBL" id="CP000116">
    <property type="protein sequence ID" value="AAZ97616.1"/>
    <property type="molecule type" value="Genomic_DNA"/>
</dbReference>
<dbReference type="RefSeq" id="WP_011312175.1">
    <property type="nucleotide sequence ID" value="NC_007404.1"/>
</dbReference>
<dbReference type="SMR" id="Q3SIB2"/>
<dbReference type="STRING" id="292415.Tbd_1663"/>
<dbReference type="KEGG" id="tbd:Tbd_1663"/>
<dbReference type="eggNOG" id="COG0328">
    <property type="taxonomic scope" value="Bacteria"/>
</dbReference>
<dbReference type="HOGENOM" id="CLU_030894_6_0_4"/>
<dbReference type="OrthoDB" id="7845843at2"/>
<dbReference type="Proteomes" id="UP000008291">
    <property type="component" value="Chromosome"/>
</dbReference>
<dbReference type="GO" id="GO:0005737">
    <property type="term" value="C:cytoplasm"/>
    <property type="evidence" value="ECO:0007669"/>
    <property type="project" value="UniProtKB-SubCell"/>
</dbReference>
<dbReference type="GO" id="GO:0000287">
    <property type="term" value="F:magnesium ion binding"/>
    <property type="evidence" value="ECO:0007669"/>
    <property type="project" value="UniProtKB-UniRule"/>
</dbReference>
<dbReference type="GO" id="GO:0003676">
    <property type="term" value="F:nucleic acid binding"/>
    <property type="evidence" value="ECO:0007669"/>
    <property type="project" value="InterPro"/>
</dbReference>
<dbReference type="GO" id="GO:0004523">
    <property type="term" value="F:RNA-DNA hybrid ribonuclease activity"/>
    <property type="evidence" value="ECO:0007669"/>
    <property type="project" value="UniProtKB-UniRule"/>
</dbReference>
<dbReference type="GO" id="GO:0043137">
    <property type="term" value="P:DNA replication, removal of RNA primer"/>
    <property type="evidence" value="ECO:0007669"/>
    <property type="project" value="TreeGrafter"/>
</dbReference>
<dbReference type="CDD" id="cd09278">
    <property type="entry name" value="RNase_HI_prokaryote_like"/>
    <property type="match status" value="1"/>
</dbReference>
<dbReference type="FunFam" id="3.30.420.10:FF:000089">
    <property type="entry name" value="Ribonuclease H"/>
    <property type="match status" value="1"/>
</dbReference>
<dbReference type="Gene3D" id="3.30.420.10">
    <property type="entry name" value="Ribonuclease H-like superfamily/Ribonuclease H"/>
    <property type="match status" value="1"/>
</dbReference>
<dbReference type="HAMAP" id="MF_00042">
    <property type="entry name" value="RNase_H"/>
    <property type="match status" value="1"/>
</dbReference>
<dbReference type="InterPro" id="IPR050092">
    <property type="entry name" value="RNase_H"/>
</dbReference>
<dbReference type="InterPro" id="IPR012337">
    <property type="entry name" value="RNaseH-like_sf"/>
</dbReference>
<dbReference type="InterPro" id="IPR002156">
    <property type="entry name" value="RNaseH_domain"/>
</dbReference>
<dbReference type="InterPro" id="IPR036397">
    <property type="entry name" value="RNaseH_sf"/>
</dbReference>
<dbReference type="InterPro" id="IPR022892">
    <property type="entry name" value="RNaseHI"/>
</dbReference>
<dbReference type="NCBIfam" id="NF001236">
    <property type="entry name" value="PRK00203.1"/>
    <property type="match status" value="1"/>
</dbReference>
<dbReference type="PANTHER" id="PTHR10642">
    <property type="entry name" value="RIBONUCLEASE H1"/>
    <property type="match status" value="1"/>
</dbReference>
<dbReference type="PANTHER" id="PTHR10642:SF26">
    <property type="entry name" value="RIBONUCLEASE H1"/>
    <property type="match status" value="1"/>
</dbReference>
<dbReference type="Pfam" id="PF00075">
    <property type="entry name" value="RNase_H"/>
    <property type="match status" value="1"/>
</dbReference>
<dbReference type="SUPFAM" id="SSF53098">
    <property type="entry name" value="Ribonuclease H-like"/>
    <property type="match status" value="1"/>
</dbReference>
<dbReference type="PROSITE" id="PS50879">
    <property type="entry name" value="RNASE_H_1"/>
    <property type="match status" value="1"/>
</dbReference>
<keyword id="KW-0963">Cytoplasm</keyword>
<keyword id="KW-0255">Endonuclease</keyword>
<keyword id="KW-0378">Hydrolase</keyword>
<keyword id="KW-0460">Magnesium</keyword>
<keyword id="KW-0479">Metal-binding</keyword>
<keyword id="KW-0540">Nuclease</keyword>
<keyword id="KW-1185">Reference proteome</keyword>